<gene>
    <name type="ordered locus">SAOUHSC_00760</name>
</gene>
<feature type="chain" id="PRO_0000286959" description="Uncharacterized membrane protein SAOUHSC_00760">
    <location>
        <begin position="1"/>
        <end position="356"/>
    </location>
</feature>
<feature type="transmembrane region" description="Helical" evidence="1">
    <location>
        <begin position="2"/>
        <end position="22"/>
    </location>
</feature>
<feature type="transmembrane region" description="Helical" evidence="1">
    <location>
        <begin position="35"/>
        <end position="55"/>
    </location>
</feature>
<feature type="transmembrane region" description="Helical" evidence="1">
    <location>
        <begin position="74"/>
        <end position="94"/>
    </location>
</feature>
<feature type="transmembrane region" description="Helical" evidence="1">
    <location>
        <begin position="99"/>
        <end position="119"/>
    </location>
</feature>
<feature type="transmembrane region" description="Helical" evidence="1">
    <location>
        <begin position="124"/>
        <end position="144"/>
    </location>
</feature>
<feature type="transmembrane region" description="Helical" evidence="1">
    <location>
        <begin position="154"/>
        <end position="174"/>
    </location>
</feature>
<feature type="domain" description="GGDEF" evidence="2">
    <location>
        <begin position="218"/>
        <end position="353"/>
    </location>
</feature>
<dbReference type="EMBL" id="CP000253">
    <property type="protein sequence ID" value="ABD29892.1"/>
    <property type="molecule type" value="Genomic_DNA"/>
</dbReference>
<dbReference type="RefSeq" id="YP_499319.1">
    <property type="nucleotide sequence ID" value="NC_007795.1"/>
</dbReference>
<dbReference type="SMR" id="Q2G061"/>
<dbReference type="STRING" id="93061.SAOUHSC_00760"/>
<dbReference type="PaxDb" id="1280-SAXN108_0813"/>
<dbReference type="GeneID" id="3919521"/>
<dbReference type="KEGG" id="sao:SAOUHSC_00760"/>
<dbReference type="PATRIC" id="fig|93061.5.peg.686"/>
<dbReference type="eggNOG" id="COG2199">
    <property type="taxonomic scope" value="Bacteria"/>
</dbReference>
<dbReference type="HOGENOM" id="CLU_000445_11_1_9"/>
<dbReference type="OrthoDB" id="9759607at2"/>
<dbReference type="PRO" id="PR:Q2G061"/>
<dbReference type="Proteomes" id="UP000008816">
    <property type="component" value="Chromosome"/>
</dbReference>
<dbReference type="GO" id="GO:0005886">
    <property type="term" value="C:plasma membrane"/>
    <property type="evidence" value="ECO:0000318"/>
    <property type="project" value="GO_Central"/>
</dbReference>
<dbReference type="GO" id="GO:0052621">
    <property type="term" value="F:diguanylate cyclase activity"/>
    <property type="evidence" value="ECO:0000318"/>
    <property type="project" value="GO_Central"/>
</dbReference>
<dbReference type="GO" id="GO:0000155">
    <property type="term" value="F:phosphorelay sensor kinase activity"/>
    <property type="evidence" value="ECO:0007669"/>
    <property type="project" value="InterPro"/>
</dbReference>
<dbReference type="GO" id="GO:0043709">
    <property type="term" value="P:cell adhesion involved in single-species biofilm formation"/>
    <property type="evidence" value="ECO:0000318"/>
    <property type="project" value="GO_Central"/>
</dbReference>
<dbReference type="GO" id="GO:0071555">
    <property type="term" value="P:cell wall organization"/>
    <property type="evidence" value="ECO:0007669"/>
    <property type="project" value="InterPro"/>
</dbReference>
<dbReference type="GO" id="GO:1902201">
    <property type="term" value="P:negative regulation of bacterial-type flagellum-dependent cell motility"/>
    <property type="evidence" value="ECO:0000318"/>
    <property type="project" value="GO_Central"/>
</dbReference>
<dbReference type="CDD" id="cd01949">
    <property type="entry name" value="GGDEF"/>
    <property type="match status" value="1"/>
</dbReference>
<dbReference type="FunFam" id="3.30.70.270:FF:000038">
    <property type="entry name" value="Diguanylate cyclase domain protein"/>
    <property type="match status" value="1"/>
</dbReference>
<dbReference type="Gene3D" id="3.30.70.270">
    <property type="match status" value="1"/>
</dbReference>
<dbReference type="InterPro" id="IPR050469">
    <property type="entry name" value="Diguanylate_Cyclase"/>
</dbReference>
<dbReference type="InterPro" id="IPR000160">
    <property type="entry name" value="GGDEF_dom"/>
</dbReference>
<dbReference type="InterPro" id="IPR029787">
    <property type="entry name" value="Nucleotide_cyclase"/>
</dbReference>
<dbReference type="InterPro" id="IPR043128">
    <property type="entry name" value="Rev_trsase/Diguanyl_cyclase"/>
</dbReference>
<dbReference type="InterPro" id="IPR011620">
    <property type="entry name" value="Sig_transdc_His_kinase_LytS_TM"/>
</dbReference>
<dbReference type="NCBIfam" id="TIGR00254">
    <property type="entry name" value="GGDEF"/>
    <property type="match status" value="1"/>
</dbReference>
<dbReference type="PANTHER" id="PTHR45138:SF9">
    <property type="entry name" value="DIGUANYLATE CYCLASE DGCM-RELATED"/>
    <property type="match status" value="1"/>
</dbReference>
<dbReference type="PANTHER" id="PTHR45138">
    <property type="entry name" value="REGULATORY COMPONENTS OF SENSORY TRANSDUCTION SYSTEM"/>
    <property type="match status" value="1"/>
</dbReference>
<dbReference type="Pfam" id="PF07694">
    <property type="entry name" value="5TM-5TMR_LYT"/>
    <property type="match status" value="1"/>
</dbReference>
<dbReference type="Pfam" id="PF00990">
    <property type="entry name" value="GGDEF"/>
    <property type="match status" value="1"/>
</dbReference>
<dbReference type="SMART" id="SM00267">
    <property type="entry name" value="GGDEF"/>
    <property type="match status" value="1"/>
</dbReference>
<dbReference type="SUPFAM" id="SSF55073">
    <property type="entry name" value="Nucleotide cyclase"/>
    <property type="match status" value="1"/>
</dbReference>
<dbReference type="PROSITE" id="PS50887">
    <property type="entry name" value="GGDEF"/>
    <property type="match status" value="1"/>
</dbReference>
<comment type="subcellular location">
    <subcellularLocation>
        <location evidence="3">Cell membrane</location>
        <topology evidence="3">Multi-pass membrane protein</topology>
    </subcellularLocation>
</comment>
<evidence type="ECO:0000255" key="1"/>
<evidence type="ECO:0000255" key="2">
    <source>
        <dbReference type="PROSITE-ProRule" id="PRU00095"/>
    </source>
</evidence>
<evidence type="ECO:0000305" key="3"/>
<accession>Q2G061</accession>
<protein>
    <recommendedName>
        <fullName>Uncharacterized membrane protein SAOUHSC_00760</fullName>
    </recommendedName>
</protein>
<sequence>MFEAFIYNISVIVAGIYLFHRLQYSENKRMVFSKAYVTVLMTIVSLLLSVYPIPYREDYLIHLTFVPLLFLGRFTNMVYTLSATVIVAIVEIVVFNNSIMYGVTLIVIAAVTSAIGPFLKQNDVLSLLILNVVTIIILFGVALVSPIYTLSEVIILIPISLIITLASAITFVDIWHFFSLVNRYENEDKYDYLTGLGNVKEFDRHLNEISRKAEKEHQSIALLLIDIDGFKDVNDTYSHKSGDAVLKQMSQLLKNYVPNQFKIFRNGGEEFSVVIHNYSLDQSVKLAENIRSGVEKSSFHLPNKEVIKLSVSIGVGYLTDDDPKSQRKVFKDADDMVHVAKNQGRNKVMFNPIINL</sequence>
<keyword id="KW-1003">Cell membrane</keyword>
<keyword id="KW-0472">Membrane</keyword>
<keyword id="KW-1185">Reference proteome</keyword>
<keyword id="KW-0812">Transmembrane</keyword>
<keyword id="KW-1133">Transmembrane helix</keyword>
<reference key="1">
    <citation type="book" date="2006" name="Gram positive pathogens, 2nd edition">
        <title>The Staphylococcus aureus NCTC 8325 genome.</title>
        <editorList>
            <person name="Fischetti V."/>
            <person name="Novick R."/>
            <person name="Ferretti J."/>
            <person name="Portnoy D."/>
            <person name="Rood J."/>
        </editorList>
        <authorList>
            <person name="Gillaspy A.F."/>
            <person name="Worrell V."/>
            <person name="Orvis J."/>
            <person name="Roe B.A."/>
            <person name="Dyer D.W."/>
            <person name="Iandolo J.J."/>
        </authorList>
    </citation>
    <scope>NUCLEOTIDE SEQUENCE [LARGE SCALE GENOMIC DNA]</scope>
    <source>
        <strain>NCTC 8325 / PS 47</strain>
    </source>
</reference>
<name>Y760_STAA8</name>
<proteinExistence type="predicted"/>
<organism>
    <name type="scientific">Staphylococcus aureus (strain NCTC 8325 / PS 47)</name>
    <dbReference type="NCBI Taxonomy" id="93061"/>
    <lineage>
        <taxon>Bacteria</taxon>
        <taxon>Bacillati</taxon>
        <taxon>Bacillota</taxon>
        <taxon>Bacilli</taxon>
        <taxon>Bacillales</taxon>
        <taxon>Staphylococcaceae</taxon>
        <taxon>Staphylococcus</taxon>
    </lineage>
</organism>